<dbReference type="EMBL" id="AY249189">
    <property type="protein sequence ID" value="AAO64430.1"/>
    <property type="molecule type" value="mRNA"/>
</dbReference>
<dbReference type="EMBL" id="AK049336">
    <property type="protein sequence ID" value="BAC33691.1"/>
    <property type="molecule type" value="mRNA"/>
</dbReference>
<dbReference type="EMBL" id="AK129440">
    <property type="protein sequence ID" value="BAC98250.1"/>
    <property type="molecule type" value="mRNA"/>
</dbReference>
<dbReference type="EMBL" id="AK147729">
    <property type="protein sequence ID" value="BAE28099.1"/>
    <property type="molecule type" value="mRNA"/>
</dbReference>
<dbReference type="EMBL" id="AK028330">
    <property type="protein sequence ID" value="BAC25884.1"/>
    <property type="molecule type" value="mRNA"/>
</dbReference>
<dbReference type="CCDS" id="CCDS29231.1"/>
<dbReference type="RefSeq" id="NP_775599.1">
    <property type="nucleotide sequence ID" value="NM_173423.4"/>
</dbReference>
<dbReference type="SMR" id="Q8CEF1"/>
<dbReference type="BioGRID" id="232187">
    <property type="interactions" value="2"/>
</dbReference>
<dbReference type="FunCoup" id="Q8CEF1">
    <property type="interactions" value="1734"/>
</dbReference>
<dbReference type="STRING" id="10090.ENSMUSP00000038816"/>
<dbReference type="iPTMnet" id="Q8CEF1"/>
<dbReference type="PhosphoSitePlus" id="Q8CEF1"/>
<dbReference type="PaxDb" id="10090-ENSMUSP00000038816"/>
<dbReference type="ProteomicsDB" id="271739"/>
<dbReference type="Pumba" id="Q8CEF1"/>
<dbReference type="Antibodypedia" id="25422">
    <property type="antibodies" value="125 antibodies from 25 providers"/>
</dbReference>
<dbReference type="DNASU" id="240263"/>
<dbReference type="Ensembl" id="ENSMUST00000036226.6">
    <property type="protein sequence ID" value="ENSMUSP00000038816.6"/>
    <property type="gene ID" value="ENSMUSG00000033319.6"/>
</dbReference>
<dbReference type="GeneID" id="240263"/>
<dbReference type="KEGG" id="mmu:240263"/>
<dbReference type="UCSC" id="uc008evo.1">
    <property type="organism name" value="mouse"/>
</dbReference>
<dbReference type="AGR" id="MGI:2444737"/>
<dbReference type="CTD" id="56929"/>
<dbReference type="MGI" id="MGI:2444737">
    <property type="gene designation" value="Fem1c"/>
</dbReference>
<dbReference type="VEuPathDB" id="HostDB:ENSMUSG00000033319"/>
<dbReference type="eggNOG" id="KOG0508">
    <property type="taxonomic scope" value="Eukaryota"/>
</dbReference>
<dbReference type="GeneTree" id="ENSGT00940000158626"/>
<dbReference type="HOGENOM" id="CLU_020042_2_0_1"/>
<dbReference type="InParanoid" id="Q8CEF1"/>
<dbReference type="OMA" id="FMTTEWR"/>
<dbReference type="OrthoDB" id="4429489at2759"/>
<dbReference type="PhylomeDB" id="Q8CEF1"/>
<dbReference type="TreeFam" id="TF351376"/>
<dbReference type="Reactome" id="R-MMU-8951664">
    <property type="pathway name" value="Neddylation"/>
</dbReference>
<dbReference type="UniPathway" id="UPA00143"/>
<dbReference type="BioGRID-ORCS" id="240263">
    <property type="hits" value="3 hits in 76 CRISPR screens"/>
</dbReference>
<dbReference type="ChiTaRS" id="Fem1c">
    <property type="organism name" value="mouse"/>
</dbReference>
<dbReference type="PRO" id="PR:Q8CEF1"/>
<dbReference type="Proteomes" id="UP000000589">
    <property type="component" value="Chromosome 18"/>
</dbReference>
<dbReference type="RNAct" id="Q8CEF1">
    <property type="molecule type" value="protein"/>
</dbReference>
<dbReference type="Bgee" id="ENSMUSG00000033319">
    <property type="expression patterns" value="Expressed in otolith organ and 222 other cell types or tissues"/>
</dbReference>
<dbReference type="ExpressionAtlas" id="Q8CEF1">
    <property type="expression patterns" value="baseline and differential"/>
</dbReference>
<dbReference type="GO" id="GO:0031462">
    <property type="term" value="C:Cul2-RING ubiquitin ligase complex"/>
    <property type="evidence" value="ECO:0000250"/>
    <property type="project" value="UniProtKB"/>
</dbReference>
<dbReference type="GO" id="GO:0005829">
    <property type="term" value="C:cytosol"/>
    <property type="evidence" value="ECO:0007669"/>
    <property type="project" value="Ensembl"/>
</dbReference>
<dbReference type="GO" id="GO:0005654">
    <property type="term" value="C:nucleoplasm"/>
    <property type="evidence" value="ECO:0007669"/>
    <property type="project" value="Ensembl"/>
</dbReference>
<dbReference type="GO" id="GO:1990756">
    <property type="term" value="F:ubiquitin-like ligase-substrate adaptor activity"/>
    <property type="evidence" value="ECO:0000250"/>
    <property type="project" value="UniProtKB"/>
</dbReference>
<dbReference type="GO" id="GO:0043161">
    <property type="term" value="P:proteasome-mediated ubiquitin-dependent protein catabolic process"/>
    <property type="evidence" value="ECO:0000250"/>
    <property type="project" value="UniProtKB"/>
</dbReference>
<dbReference type="GO" id="GO:0016567">
    <property type="term" value="P:protein ubiquitination"/>
    <property type="evidence" value="ECO:0007669"/>
    <property type="project" value="UniProtKB-UniPathway"/>
</dbReference>
<dbReference type="GO" id="GO:0140627">
    <property type="term" value="P:ubiquitin-dependent protein catabolic process via the C-end degron rule pathway"/>
    <property type="evidence" value="ECO:0000250"/>
    <property type="project" value="UniProtKB"/>
</dbReference>
<dbReference type="FunFam" id="1.25.40.10:FF:000104">
    <property type="entry name" value="Fem-1 homolog c (C.elegans)"/>
    <property type="match status" value="1"/>
</dbReference>
<dbReference type="FunFam" id="1.25.40.20:FF:000076">
    <property type="entry name" value="Fem-1 homolog c (C.elegans)"/>
    <property type="match status" value="1"/>
</dbReference>
<dbReference type="FunFam" id="1.25.40.20:FF:000163">
    <property type="entry name" value="Fem-1 homolog c (C.elegans)"/>
    <property type="match status" value="1"/>
</dbReference>
<dbReference type="FunFam" id="1.25.40.20:FF:000173">
    <property type="entry name" value="Fem-1 homolog c (C.elegans)"/>
    <property type="match status" value="1"/>
</dbReference>
<dbReference type="Gene3D" id="1.25.40.20">
    <property type="entry name" value="Ankyrin repeat-containing domain"/>
    <property type="match status" value="3"/>
</dbReference>
<dbReference type="Gene3D" id="1.25.40.10">
    <property type="entry name" value="Tetratricopeptide repeat domain"/>
    <property type="match status" value="1"/>
</dbReference>
<dbReference type="InterPro" id="IPR002110">
    <property type="entry name" value="Ankyrin_rpt"/>
</dbReference>
<dbReference type="InterPro" id="IPR036770">
    <property type="entry name" value="Ankyrin_rpt-contain_sf"/>
</dbReference>
<dbReference type="InterPro" id="IPR011990">
    <property type="entry name" value="TPR-like_helical_dom_sf"/>
</dbReference>
<dbReference type="PANTHER" id="PTHR24173">
    <property type="entry name" value="ANKYRIN REPEAT CONTAINING"/>
    <property type="match status" value="1"/>
</dbReference>
<dbReference type="PANTHER" id="PTHR24173:SF74">
    <property type="entry name" value="ANKYRIN REPEAT DOMAIN-CONTAINING PROTEIN 16"/>
    <property type="match status" value="1"/>
</dbReference>
<dbReference type="Pfam" id="PF00023">
    <property type="entry name" value="Ank"/>
    <property type="match status" value="1"/>
</dbReference>
<dbReference type="Pfam" id="PF12796">
    <property type="entry name" value="Ank_2"/>
    <property type="match status" value="3"/>
</dbReference>
<dbReference type="PRINTS" id="PR01415">
    <property type="entry name" value="ANKYRIN"/>
</dbReference>
<dbReference type="SMART" id="SM00248">
    <property type="entry name" value="ANK"/>
    <property type="match status" value="9"/>
</dbReference>
<dbReference type="SUPFAM" id="SSF48403">
    <property type="entry name" value="Ankyrin repeat"/>
    <property type="match status" value="2"/>
</dbReference>
<dbReference type="PROSITE" id="PS50297">
    <property type="entry name" value="ANK_REP_REGION"/>
    <property type="match status" value="2"/>
</dbReference>
<dbReference type="PROSITE" id="PS50088">
    <property type="entry name" value="ANK_REPEAT"/>
    <property type="match status" value="7"/>
</dbReference>
<organism>
    <name type="scientific">Mus musculus</name>
    <name type="common">Mouse</name>
    <dbReference type="NCBI Taxonomy" id="10090"/>
    <lineage>
        <taxon>Eukaryota</taxon>
        <taxon>Metazoa</taxon>
        <taxon>Chordata</taxon>
        <taxon>Craniata</taxon>
        <taxon>Vertebrata</taxon>
        <taxon>Euteleostomi</taxon>
        <taxon>Mammalia</taxon>
        <taxon>Eutheria</taxon>
        <taxon>Euarchontoglires</taxon>
        <taxon>Glires</taxon>
        <taxon>Rodentia</taxon>
        <taxon>Myomorpha</taxon>
        <taxon>Muroidea</taxon>
        <taxon>Muridae</taxon>
        <taxon>Murinae</taxon>
        <taxon>Mus</taxon>
        <taxon>Mus</taxon>
    </lineage>
</organism>
<feature type="chain" id="PRO_0000324537" description="Protein fem-1 homolog C">
    <location>
        <begin position="1"/>
        <end position="617"/>
    </location>
</feature>
<feature type="repeat" description="ANK 1">
    <location>
        <begin position="2"/>
        <end position="31"/>
    </location>
</feature>
<feature type="repeat" description="ANK 2">
    <location>
        <begin position="40"/>
        <end position="70"/>
    </location>
</feature>
<feature type="repeat" description="ANK 3">
    <location>
        <begin position="82"/>
        <end position="111"/>
    </location>
</feature>
<feature type="repeat" description="ANK 4">
    <location>
        <begin position="115"/>
        <end position="144"/>
    </location>
</feature>
<feature type="repeat" description="ANK 5">
    <location>
        <begin position="148"/>
        <end position="177"/>
    </location>
</feature>
<feature type="repeat" description="ANK 6">
    <location>
        <begin position="181"/>
        <end position="210"/>
    </location>
</feature>
<feature type="repeat" description="ANK 7">
    <location>
        <begin position="213"/>
        <end position="242"/>
    </location>
</feature>
<feature type="repeat" description="TPR 1">
    <location>
        <begin position="245"/>
        <end position="279"/>
    </location>
</feature>
<feature type="repeat" description="TPR 2">
    <location>
        <begin position="338"/>
        <end position="371"/>
    </location>
</feature>
<feature type="repeat" description="ANK 8">
    <location>
        <begin position="481"/>
        <end position="523"/>
    </location>
</feature>
<feature type="repeat" description="ANK 9">
    <location>
        <begin position="527"/>
        <end position="556"/>
    </location>
</feature>
<feature type="modified residue" description="N-acetylmethionine" evidence="1">
    <location>
        <position position="1"/>
    </location>
</feature>
<feature type="sequence conflict" description="In Ref. 2; BAC33691." evidence="6" ref="2">
    <original>I</original>
    <variation>V</variation>
    <location>
        <position position="35"/>
    </location>
</feature>
<feature type="sequence conflict" description="In Ref. 2; BAE28099." evidence="6" ref="2">
    <original>C</original>
    <variation>Y</variation>
    <location>
        <position position="64"/>
    </location>
</feature>
<feature type="sequence conflict" description="In Ref. 2; BAC33691." evidence="6" ref="2">
    <original>D</original>
    <variation>G</variation>
    <location>
        <position position="528"/>
    </location>
</feature>
<proteinExistence type="evidence at transcript level"/>
<evidence type="ECO:0000250" key="1">
    <source>
        <dbReference type="UniProtKB" id="Q96JP0"/>
    </source>
</evidence>
<evidence type="ECO:0000269" key="2">
    <source>
    </source>
</evidence>
<evidence type="ECO:0000269" key="3">
    <source>
    </source>
</evidence>
<evidence type="ECO:0000303" key="4">
    <source>
    </source>
</evidence>
<evidence type="ECO:0000303" key="5">
    <source>
    </source>
</evidence>
<evidence type="ECO:0000305" key="6"/>
<evidence type="ECO:0000312" key="7">
    <source>
        <dbReference type="MGI" id="MGI:2444737"/>
    </source>
</evidence>
<accession>Q8CEF1</accession>
<accession>Q3UGV8</accession>
<accession>Q8C7S4</accession>
<reference key="1">
    <citation type="journal article" date="2003" name="Gene">
        <title>The Fem1c genes: conserved members of the Fem1 gene family in vertebrates.</title>
        <authorList>
            <person name="Ventura-Holman T."/>
            <person name="Lu D."/>
            <person name="Si X."/>
            <person name="Izevbigie E.B."/>
            <person name="Maher J.F."/>
        </authorList>
    </citation>
    <scope>NUCLEOTIDE SEQUENCE [MRNA]</scope>
    <scope>TISSUE SPECIFICITY</scope>
    <source>
        <strain>CD-1</strain>
        <tissue>Testis</tissue>
    </source>
</reference>
<reference key="2">
    <citation type="journal article" date="2003" name="DNA Res.">
        <title>Prediction of the coding sequences of mouse homologues of KIAA gene: III. The complete nucleotide sequences of 500 mouse KIAA-homologous cDNAs identified by screening of terminal sequences of cDNA clones randomly sampled from size-fractionated libraries.</title>
        <authorList>
            <person name="Okazaki N."/>
            <person name="Kikuno R."/>
            <person name="Ohara R."/>
            <person name="Inamoto S."/>
            <person name="Koseki H."/>
            <person name="Hiraoka S."/>
            <person name="Saga Y."/>
            <person name="Nagase T."/>
            <person name="Ohara O."/>
            <person name="Koga H."/>
        </authorList>
    </citation>
    <scope>NUCLEOTIDE SEQUENCE [LARGE SCALE MRNA]</scope>
    <source>
        <tissue>Embryonic tail</tissue>
    </source>
</reference>
<reference key="3">
    <citation type="journal article" date="2005" name="Science">
        <title>The transcriptional landscape of the mammalian genome.</title>
        <authorList>
            <person name="Carninci P."/>
            <person name="Kasukawa T."/>
            <person name="Katayama S."/>
            <person name="Gough J."/>
            <person name="Frith M.C."/>
            <person name="Maeda N."/>
            <person name="Oyama R."/>
            <person name="Ravasi T."/>
            <person name="Lenhard B."/>
            <person name="Wells C."/>
            <person name="Kodzius R."/>
            <person name="Shimokawa K."/>
            <person name="Bajic V.B."/>
            <person name="Brenner S.E."/>
            <person name="Batalov S."/>
            <person name="Forrest A.R."/>
            <person name="Zavolan M."/>
            <person name="Davis M.J."/>
            <person name="Wilming L.G."/>
            <person name="Aidinis V."/>
            <person name="Allen J.E."/>
            <person name="Ambesi-Impiombato A."/>
            <person name="Apweiler R."/>
            <person name="Aturaliya R.N."/>
            <person name="Bailey T.L."/>
            <person name="Bansal M."/>
            <person name="Baxter L."/>
            <person name="Beisel K.W."/>
            <person name="Bersano T."/>
            <person name="Bono H."/>
            <person name="Chalk A.M."/>
            <person name="Chiu K.P."/>
            <person name="Choudhary V."/>
            <person name="Christoffels A."/>
            <person name="Clutterbuck D.R."/>
            <person name="Crowe M.L."/>
            <person name="Dalla E."/>
            <person name="Dalrymple B.P."/>
            <person name="de Bono B."/>
            <person name="Della Gatta G."/>
            <person name="di Bernardo D."/>
            <person name="Down T."/>
            <person name="Engstrom P."/>
            <person name="Fagiolini M."/>
            <person name="Faulkner G."/>
            <person name="Fletcher C.F."/>
            <person name="Fukushima T."/>
            <person name="Furuno M."/>
            <person name="Futaki S."/>
            <person name="Gariboldi M."/>
            <person name="Georgii-Hemming P."/>
            <person name="Gingeras T.R."/>
            <person name="Gojobori T."/>
            <person name="Green R.E."/>
            <person name="Gustincich S."/>
            <person name="Harbers M."/>
            <person name="Hayashi Y."/>
            <person name="Hensch T.K."/>
            <person name="Hirokawa N."/>
            <person name="Hill D."/>
            <person name="Huminiecki L."/>
            <person name="Iacono M."/>
            <person name="Ikeo K."/>
            <person name="Iwama A."/>
            <person name="Ishikawa T."/>
            <person name="Jakt M."/>
            <person name="Kanapin A."/>
            <person name="Katoh M."/>
            <person name="Kawasawa Y."/>
            <person name="Kelso J."/>
            <person name="Kitamura H."/>
            <person name="Kitano H."/>
            <person name="Kollias G."/>
            <person name="Krishnan S.P."/>
            <person name="Kruger A."/>
            <person name="Kummerfeld S.K."/>
            <person name="Kurochkin I.V."/>
            <person name="Lareau L.F."/>
            <person name="Lazarevic D."/>
            <person name="Lipovich L."/>
            <person name="Liu J."/>
            <person name="Liuni S."/>
            <person name="McWilliam S."/>
            <person name="Madan Babu M."/>
            <person name="Madera M."/>
            <person name="Marchionni L."/>
            <person name="Matsuda H."/>
            <person name="Matsuzawa S."/>
            <person name="Miki H."/>
            <person name="Mignone F."/>
            <person name="Miyake S."/>
            <person name="Morris K."/>
            <person name="Mottagui-Tabar S."/>
            <person name="Mulder N."/>
            <person name="Nakano N."/>
            <person name="Nakauchi H."/>
            <person name="Ng P."/>
            <person name="Nilsson R."/>
            <person name="Nishiguchi S."/>
            <person name="Nishikawa S."/>
            <person name="Nori F."/>
            <person name="Ohara O."/>
            <person name="Okazaki Y."/>
            <person name="Orlando V."/>
            <person name="Pang K.C."/>
            <person name="Pavan W.J."/>
            <person name="Pavesi G."/>
            <person name="Pesole G."/>
            <person name="Petrovsky N."/>
            <person name="Piazza S."/>
            <person name="Reed J."/>
            <person name="Reid J.F."/>
            <person name="Ring B.Z."/>
            <person name="Ringwald M."/>
            <person name="Rost B."/>
            <person name="Ruan Y."/>
            <person name="Salzberg S.L."/>
            <person name="Sandelin A."/>
            <person name="Schneider C."/>
            <person name="Schoenbach C."/>
            <person name="Sekiguchi K."/>
            <person name="Semple C.A."/>
            <person name="Seno S."/>
            <person name="Sessa L."/>
            <person name="Sheng Y."/>
            <person name="Shibata Y."/>
            <person name="Shimada H."/>
            <person name="Shimada K."/>
            <person name="Silva D."/>
            <person name="Sinclair B."/>
            <person name="Sperling S."/>
            <person name="Stupka E."/>
            <person name="Sugiura K."/>
            <person name="Sultana R."/>
            <person name="Takenaka Y."/>
            <person name="Taki K."/>
            <person name="Tammoja K."/>
            <person name="Tan S.L."/>
            <person name="Tang S."/>
            <person name="Taylor M.S."/>
            <person name="Tegner J."/>
            <person name="Teichmann S.A."/>
            <person name="Ueda H.R."/>
            <person name="van Nimwegen E."/>
            <person name="Verardo R."/>
            <person name="Wei C.L."/>
            <person name="Yagi K."/>
            <person name="Yamanishi H."/>
            <person name="Zabarovsky E."/>
            <person name="Zhu S."/>
            <person name="Zimmer A."/>
            <person name="Hide W."/>
            <person name="Bult C."/>
            <person name="Grimmond S.M."/>
            <person name="Teasdale R.D."/>
            <person name="Liu E.T."/>
            <person name="Brusic V."/>
            <person name="Quackenbush J."/>
            <person name="Wahlestedt C."/>
            <person name="Mattick J.S."/>
            <person name="Hume D.A."/>
            <person name="Kai C."/>
            <person name="Sasaki D."/>
            <person name="Tomaru Y."/>
            <person name="Fukuda S."/>
            <person name="Kanamori-Katayama M."/>
            <person name="Suzuki M."/>
            <person name="Aoki J."/>
            <person name="Arakawa T."/>
            <person name="Iida J."/>
            <person name="Imamura K."/>
            <person name="Itoh M."/>
            <person name="Kato T."/>
            <person name="Kawaji H."/>
            <person name="Kawagashira N."/>
            <person name="Kawashima T."/>
            <person name="Kojima M."/>
            <person name="Kondo S."/>
            <person name="Konno H."/>
            <person name="Nakano K."/>
            <person name="Ninomiya N."/>
            <person name="Nishio T."/>
            <person name="Okada M."/>
            <person name="Plessy C."/>
            <person name="Shibata K."/>
            <person name="Shiraki T."/>
            <person name="Suzuki S."/>
            <person name="Tagami M."/>
            <person name="Waki K."/>
            <person name="Watahiki A."/>
            <person name="Okamura-Oho Y."/>
            <person name="Suzuki H."/>
            <person name="Kawai J."/>
            <person name="Hayashizaki Y."/>
        </authorList>
    </citation>
    <scope>NUCLEOTIDE SEQUENCE [LARGE SCALE MRNA]</scope>
    <source>
        <strain>C57BL/6J</strain>
        <tissue>Brain</tissue>
    </source>
</reference>
<reference key="4">
    <citation type="journal article" date="2004" name="Mol. Cell. Biol.">
        <title>Insertion of the beta Geo promoter trap into the Fem1c gene of ROSA3 mice.</title>
        <authorList>
            <person name="Schlamp C.L."/>
            <person name="Thliveris A.T."/>
            <person name="Li Y."/>
            <person name="Kohl L.P."/>
            <person name="Knop C."/>
            <person name="Dietz J.A."/>
            <person name="Larsen I.V."/>
            <person name="Imesch P."/>
            <person name="Pinto L.H."/>
            <person name="Nickells R.W."/>
        </authorList>
    </citation>
    <scope>ROSA3 MICE</scope>
</reference>
<sequence length="617" mass="68578">MDLKTAVFNAARDGKLRLLTKLLASKSKAEVSSLISEKTNGATPLLMAARYGHLDMVEFLLEQCSASIEVGGSVNFDGETIEGAPPLWAASAAGHLKVVQSLLNHGASVNNTTLTNSTPLRAACFDGHLEIVKYLVEHKADLEVSNRHGHTCLMISCYKGHKEIAQYLLEKGADVNRKSVKGNTALHDCAESGSLDIMKMLLMYCAKMEKDGYGMTPLLSASVTGHTNIVDFLTHHAQTSKTERINALELLGATFVDKKRDLLGALKYWKKAMNMRYSDRTNIISKPVPQTLIMAYDYAKEVNSAEELEGLIADPDEMRMQALLIRERILGPSHPDTSYYIRYRGAVYADSGNFKRCINLWKYALDMQQSNLDPLSPMTASSLLSFAELFSFMLQDRAKGLLGTTVTFDDLMGILCKSVLEIERAIKQTQCPADPLQLNKALSIILHLICLLEKVPCTVEQDHFKKQTIYRFLKLHPRGKNNFSPLHLAVDKNTTCVGRYPVCKFPSLQVTAILIECGADVNVRDSDDNSPLHIAALNNHPDIMNLLIKSGAHFDATNLHKQTASDLLDEKEIAKNLIQPINHTTLQCLAARVIVNHRIYYKGNIPEKLETFVSLHR</sequence>
<gene>
    <name evidence="4 7" type="primary">Fem1c</name>
    <name evidence="5" type="synonym">Kiaa1785</name>
</gene>
<keyword id="KW-0007">Acetylation</keyword>
<keyword id="KW-0040">ANK repeat</keyword>
<keyword id="KW-1185">Reference proteome</keyword>
<keyword id="KW-0677">Repeat</keyword>
<keyword id="KW-0802">TPR repeat</keyword>
<keyword id="KW-0833">Ubl conjugation pathway</keyword>
<comment type="function">
    <text evidence="1">Substrate-recognition component of a Cul2-RING (CRL2) E3 ubiquitin-protein ligase complex of the DesCEND (destruction via C-end degrons) pathway, which recognizes a C-degron located at the extreme C terminus of target proteins, leading to their ubiquitination and degradation (By similarity). The C-degron recognized by the DesCEND pathway is usually a motif of less than ten residues and can be present in full-length proteins, truncated proteins or proteolytically cleaved forms (By similarity). The CRL2(FEM1C) complex specifically recognizes proteins with an arginine at the C-terminus: recognizes and binds proteins ending with -Lys/Arg-Xaa-Arg and -Lys/Arg-Xaa-Xaa-Arg C-degrons, such as SIL1 or OR51B2, leading to their ubiquitination and degradation (By similarity). The CRL2(FEM1C) complex mediates ubiquitination and degradation of truncated MSRB1/SEPX1 selenoproteins produced by failed UGA/Sec decoding (By similarity). Promotes ubiquitination and degradation of SLBP (By similarity).</text>
</comment>
<comment type="pathway">
    <text evidence="1">Protein modification; protein ubiquitination.</text>
</comment>
<comment type="subunit">
    <text evidence="1">Component of a Cul2-RING (CRL2) E3 ubiquitin-protein ligase complex, also named ECS (Elongin BC-CUL2/5-SOCS-box protein) complex, composed of CUL2, Elongin BC (ELOB and ELOC), RBX1 and substrate-specific adapter FEM1C.</text>
</comment>
<comment type="tissue specificity">
    <text evidence="2">Widely expressed. Expressed at higher level in testis.</text>
</comment>
<comment type="domain">
    <text evidence="1">The first seven ANK repeats at the N-terminus (1-242) are essnetial for recognition of Lys/Arg-Xaa-Arg and -Lys/Arg-Xaa-Xaa-Arg C-degrons.</text>
</comment>
<comment type="miscellaneous">
    <text evidence="3">Insertion of the beta Geo promoter trap into the Fem1c gene is the cause of ROSA3 mice (PubMed:15082774). Adult ROSA3 mice exhibit widespread expression of the trap gene in epithelial cells found in most organs (PubMed:15082774). Although normal processing of the Fem1c transcript is disrupted in homozygous ROSA3 mice, some tissues show low levels of a partially processed transcript containing exons 2 and 3, which contain the entire coding region of Fem1c (PubMed:15082774). ROSA3 mice show no adverse effects in their sexual development or fertility or in the attenuation of neuronal cell death (PubMed:15082774).</text>
</comment>
<comment type="similarity">
    <text evidence="6">Belongs to the fem-1 family.</text>
</comment>
<name>FEM1C_MOUSE</name>
<protein>
    <recommendedName>
        <fullName evidence="6">Protein fem-1 homolog C</fullName>
        <shortName evidence="5">FEM1c</shortName>
    </recommendedName>
    <alternativeName>
        <fullName>FEM1-gamma</fullName>
    </alternativeName>
</protein>